<protein>
    <recommendedName>
        <fullName>ATP synthase epsilon chain</fullName>
    </recommendedName>
    <alternativeName>
        <fullName>ATP synthase F1 sector epsilon subunit</fullName>
    </alternativeName>
    <alternativeName>
        <fullName>F-ATPase epsilon subunit</fullName>
    </alternativeName>
</protein>
<comment type="function">
    <text evidence="1">Produces ATP from ADP in the presence of a proton gradient across the membrane.</text>
</comment>
<comment type="subunit">
    <text>F-type ATPases have 2 components, CF(1) - the catalytic core - and CF(0) - the membrane proton channel. CF(1) has five subunits: alpha(3), beta(3), gamma(1), delta(1), epsilon(1). CF(0) has three main subunits: a, b and c.</text>
</comment>
<comment type="subcellular location">
    <subcellularLocation>
        <location evidence="1">Cellular thylakoid membrane</location>
        <topology evidence="1">Peripheral membrane protein</topology>
    </subcellularLocation>
</comment>
<comment type="similarity">
    <text evidence="2">Belongs to the ATPase epsilon chain family.</text>
</comment>
<evidence type="ECO:0000250" key="1"/>
<evidence type="ECO:0000305" key="2"/>
<proteinExistence type="inferred from homology"/>
<gene>
    <name type="primary">atpC</name>
    <name type="synonym">atpE</name>
    <name type="ordered locus">all5038</name>
</gene>
<dbReference type="EMBL" id="M15336">
    <property type="protein sequence ID" value="AAA21994.1"/>
    <property type="molecule type" value="Genomic_DNA"/>
</dbReference>
<dbReference type="EMBL" id="BA000019">
    <property type="protein sequence ID" value="BAB76737.1"/>
    <property type="molecule type" value="Genomic_DNA"/>
</dbReference>
<dbReference type="PIR" id="AF2435">
    <property type="entry name" value="AF2435"/>
</dbReference>
<dbReference type="PIR" id="B26926">
    <property type="entry name" value="B26926"/>
</dbReference>
<dbReference type="RefSeq" id="WP_010999164.1">
    <property type="nucleotide sequence ID" value="NZ_RSCN01000014.1"/>
</dbReference>
<dbReference type="SMR" id="P06542"/>
<dbReference type="STRING" id="103690.gene:10497096"/>
<dbReference type="KEGG" id="ana:all5038"/>
<dbReference type="eggNOG" id="COG0355">
    <property type="taxonomic scope" value="Bacteria"/>
</dbReference>
<dbReference type="OrthoDB" id="9804110at2"/>
<dbReference type="Proteomes" id="UP000002483">
    <property type="component" value="Chromosome"/>
</dbReference>
<dbReference type="GO" id="GO:0031676">
    <property type="term" value="C:plasma membrane-derived thylakoid membrane"/>
    <property type="evidence" value="ECO:0007669"/>
    <property type="project" value="UniProtKB-SubCell"/>
</dbReference>
<dbReference type="GO" id="GO:0045259">
    <property type="term" value="C:proton-transporting ATP synthase complex"/>
    <property type="evidence" value="ECO:0007669"/>
    <property type="project" value="UniProtKB-KW"/>
</dbReference>
<dbReference type="GO" id="GO:0005524">
    <property type="term" value="F:ATP binding"/>
    <property type="evidence" value="ECO:0007669"/>
    <property type="project" value="UniProtKB-UniRule"/>
</dbReference>
<dbReference type="GO" id="GO:0046933">
    <property type="term" value="F:proton-transporting ATP synthase activity, rotational mechanism"/>
    <property type="evidence" value="ECO:0007669"/>
    <property type="project" value="UniProtKB-UniRule"/>
</dbReference>
<dbReference type="CDD" id="cd12152">
    <property type="entry name" value="F1-ATPase_delta"/>
    <property type="match status" value="1"/>
</dbReference>
<dbReference type="Gene3D" id="2.60.15.10">
    <property type="entry name" value="F0F1 ATP synthase delta/epsilon subunit, N-terminal"/>
    <property type="match status" value="1"/>
</dbReference>
<dbReference type="Gene3D" id="1.10.287.540">
    <property type="entry name" value="Helix hairpin bin"/>
    <property type="match status" value="1"/>
</dbReference>
<dbReference type="HAMAP" id="MF_00530">
    <property type="entry name" value="ATP_synth_epsil_bac"/>
    <property type="match status" value="1"/>
</dbReference>
<dbReference type="InterPro" id="IPR001469">
    <property type="entry name" value="ATP_synth_F1_dsu/esu"/>
</dbReference>
<dbReference type="InterPro" id="IPR020546">
    <property type="entry name" value="ATP_synth_F1_dsu/esu_N"/>
</dbReference>
<dbReference type="InterPro" id="IPR020547">
    <property type="entry name" value="ATP_synth_F1_esu_C"/>
</dbReference>
<dbReference type="InterPro" id="IPR036771">
    <property type="entry name" value="ATPsynth_dsu/esu_N"/>
</dbReference>
<dbReference type="NCBIfam" id="TIGR01216">
    <property type="entry name" value="ATP_synt_epsi"/>
    <property type="match status" value="1"/>
</dbReference>
<dbReference type="NCBIfam" id="NF009977">
    <property type="entry name" value="PRK13442.1"/>
    <property type="match status" value="1"/>
</dbReference>
<dbReference type="PANTHER" id="PTHR13822">
    <property type="entry name" value="ATP SYNTHASE DELTA/EPSILON CHAIN"/>
    <property type="match status" value="1"/>
</dbReference>
<dbReference type="PANTHER" id="PTHR13822:SF10">
    <property type="entry name" value="ATP SYNTHASE EPSILON CHAIN, CHLOROPLASTIC"/>
    <property type="match status" value="1"/>
</dbReference>
<dbReference type="Pfam" id="PF00401">
    <property type="entry name" value="ATP-synt_DE"/>
    <property type="match status" value="1"/>
</dbReference>
<dbReference type="Pfam" id="PF02823">
    <property type="entry name" value="ATP-synt_DE_N"/>
    <property type="match status" value="1"/>
</dbReference>
<dbReference type="SUPFAM" id="SSF51344">
    <property type="entry name" value="Epsilon subunit of F1F0-ATP synthase N-terminal domain"/>
    <property type="match status" value="1"/>
</dbReference>
<feature type="chain" id="PRO_0000188087" description="ATP synthase epsilon chain">
    <location>
        <begin position="1"/>
        <end position="137"/>
    </location>
</feature>
<feature type="sequence conflict" description="In Ref. 1; AAA21994." evidence="2" ref="1">
    <original>A</original>
    <variation>V</variation>
    <location>
        <position position="19"/>
    </location>
</feature>
<feature type="sequence conflict" description="In Ref. 1; AAA21994." evidence="2" ref="1">
    <original>L</original>
    <variation>S</variation>
    <location>
        <position position="41"/>
    </location>
</feature>
<feature type="sequence conflict" description="In Ref. 1; AAA21994." evidence="2" ref="1">
    <original>A</original>
    <variation>T</variation>
    <location>
        <position position="133"/>
    </location>
</feature>
<reference key="1">
    <citation type="journal article" date="1987" name="J. Bacteriol.">
        <title>Genes encoding the beta and epsilon subunits of the proton-translocating ATPase from Anabaena sp. strain PCC 7120.</title>
        <authorList>
            <person name="Curtis S.E."/>
        </authorList>
    </citation>
    <scope>NUCLEOTIDE SEQUENCE [GENOMIC DNA]</scope>
</reference>
<reference key="2">
    <citation type="journal article" date="2001" name="DNA Res.">
        <title>Complete genomic sequence of the filamentous nitrogen-fixing cyanobacterium Anabaena sp. strain PCC 7120.</title>
        <authorList>
            <person name="Kaneko T."/>
            <person name="Nakamura Y."/>
            <person name="Wolk C.P."/>
            <person name="Kuritz T."/>
            <person name="Sasamoto S."/>
            <person name="Watanabe A."/>
            <person name="Iriguchi M."/>
            <person name="Ishikawa A."/>
            <person name="Kawashima K."/>
            <person name="Kimura T."/>
            <person name="Kishida Y."/>
            <person name="Kohara M."/>
            <person name="Matsumoto M."/>
            <person name="Matsuno A."/>
            <person name="Muraki A."/>
            <person name="Nakazaki N."/>
            <person name="Shimpo S."/>
            <person name="Sugimoto M."/>
            <person name="Takazawa M."/>
            <person name="Yamada M."/>
            <person name="Yasuda M."/>
            <person name="Tabata S."/>
        </authorList>
    </citation>
    <scope>NUCLEOTIDE SEQUENCE [LARGE SCALE GENOMIC DNA]</scope>
    <source>
        <strain>PCC 7120 / SAG 25.82 / UTEX 2576</strain>
    </source>
</reference>
<organism>
    <name type="scientific">Nostoc sp. (strain PCC 7120 / SAG 25.82 / UTEX 2576)</name>
    <dbReference type="NCBI Taxonomy" id="103690"/>
    <lineage>
        <taxon>Bacteria</taxon>
        <taxon>Bacillati</taxon>
        <taxon>Cyanobacteriota</taxon>
        <taxon>Cyanophyceae</taxon>
        <taxon>Nostocales</taxon>
        <taxon>Nostocaceae</taxon>
        <taxon>Nostoc</taxon>
    </lineage>
</organism>
<accession>P06542</accession>
<name>ATPE_NOSS1</name>
<keyword id="KW-0066">ATP synthesis</keyword>
<keyword id="KW-0139">CF(1)</keyword>
<keyword id="KW-0375">Hydrogen ion transport</keyword>
<keyword id="KW-0406">Ion transport</keyword>
<keyword id="KW-0472">Membrane</keyword>
<keyword id="KW-1185">Reference proteome</keyword>
<keyword id="KW-0793">Thylakoid</keyword>
<keyword id="KW-0813">Transport</keyword>
<sequence length="137" mass="14656">MTLTVRVISPDKTVWDAEADEVILPSTTGQLGILSGHAPLLTALDTGVLRVRTSKSQNWQAIALLGGFAEVEEDEVTILVNGGERGDTINLEEARTAYSQAQTKLNQVPAGDRQAQIQANQAFKRARARFQAAGGLA</sequence>